<dbReference type="EC" id="3.4.11.1" evidence="1"/>
<dbReference type="EC" id="3.4.11.10" evidence="1"/>
<dbReference type="EMBL" id="CP000352">
    <property type="protein sequence ID" value="ABF09680.1"/>
    <property type="molecule type" value="Genomic_DNA"/>
</dbReference>
<dbReference type="RefSeq" id="WP_011517376.1">
    <property type="nucleotide sequence ID" value="NC_007973.1"/>
</dbReference>
<dbReference type="SMR" id="Q1LJJ6"/>
<dbReference type="STRING" id="266264.Rmet_2807"/>
<dbReference type="MEROPS" id="M17.003"/>
<dbReference type="KEGG" id="rme:Rmet_2807"/>
<dbReference type="eggNOG" id="COG0260">
    <property type="taxonomic scope" value="Bacteria"/>
</dbReference>
<dbReference type="HOGENOM" id="CLU_013734_2_2_4"/>
<dbReference type="Proteomes" id="UP000002429">
    <property type="component" value="Chromosome"/>
</dbReference>
<dbReference type="GO" id="GO:0005737">
    <property type="term" value="C:cytoplasm"/>
    <property type="evidence" value="ECO:0007669"/>
    <property type="project" value="UniProtKB-SubCell"/>
</dbReference>
<dbReference type="GO" id="GO:0030145">
    <property type="term" value="F:manganese ion binding"/>
    <property type="evidence" value="ECO:0007669"/>
    <property type="project" value="UniProtKB-UniRule"/>
</dbReference>
<dbReference type="GO" id="GO:0070006">
    <property type="term" value="F:metalloaminopeptidase activity"/>
    <property type="evidence" value="ECO:0007669"/>
    <property type="project" value="InterPro"/>
</dbReference>
<dbReference type="GO" id="GO:0006508">
    <property type="term" value="P:proteolysis"/>
    <property type="evidence" value="ECO:0007669"/>
    <property type="project" value="UniProtKB-KW"/>
</dbReference>
<dbReference type="CDD" id="cd00433">
    <property type="entry name" value="Peptidase_M17"/>
    <property type="match status" value="1"/>
</dbReference>
<dbReference type="FunFam" id="3.40.630.10:FF:000004">
    <property type="entry name" value="Probable cytosol aminopeptidase"/>
    <property type="match status" value="1"/>
</dbReference>
<dbReference type="Gene3D" id="3.40.220.10">
    <property type="entry name" value="Leucine Aminopeptidase, subunit E, domain 1"/>
    <property type="match status" value="1"/>
</dbReference>
<dbReference type="Gene3D" id="3.40.630.10">
    <property type="entry name" value="Zn peptidases"/>
    <property type="match status" value="1"/>
</dbReference>
<dbReference type="HAMAP" id="MF_00181">
    <property type="entry name" value="Cytosol_peptidase_M17"/>
    <property type="match status" value="1"/>
</dbReference>
<dbReference type="InterPro" id="IPR011356">
    <property type="entry name" value="Leucine_aapep/pepB"/>
</dbReference>
<dbReference type="InterPro" id="IPR043472">
    <property type="entry name" value="Macro_dom-like"/>
</dbReference>
<dbReference type="InterPro" id="IPR000819">
    <property type="entry name" value="Peptidase_M17_C"/>
</dbReference>
<dbReference type="InterPro" id="IPR023042">
    <property type="entry name" value="Peptidase_M17_leu_NH2_pept"/>
</dbReference>
<dbReference type="InterPro" id="IPR008283">
    <property type="entry name" value="Peptidase_M17_N"/>
</dbReference>
<dbReference type="NCBIfam" id="NF002073">
    <property type="entry name" value="PRK00913.1-2"/>
    <property type="match status" value="1"/>
</dbReference>
<dbReference type="NCBIfam" id="NF002074">
    <property type="entry name" value="PRK00913.1-4"/>
    <property type="match status" value="1"/>
</dbReference>
<dbReference type="NCBIfam" id="NF002077">
    <property type="entry name" value="PRK00913.2-4"/>
    <property type="match status" value="1"/>
</dbReference>
<dbReference type="PANTHER" id="PTHR11963:SF23">
    <property type="entry name" value="CYTOSOL AMINOPEPTIDASE"/>
    <property type="match status" value="1"/>
</dbReference>
<dbReference type="PANTHER" id="PTHR11963">
    <property type="entry name" value="LEUCINE AMINOPEPTIDASE-RELATED"/>
    <property type="match status" value="1"/>
</dbReference>
<dbReference type="Pfam" id="PF00883">
    <property type="entry name" value="Peptidase_M17"/>
    <property type="match status" value="1"/>
</dbReference>
<dbReference type="Pfam" id="PF02789">
    <property type="entry name" value="Peptidase_M17_N"/>
    <property type="match status" value="1"/>
</dbReference>
<dbReference type="PRINTS" id="PR00481">
    <property type="entry name" value="LAMNOPPTDASE"/>
</dbReference>
<dbReference type="SUPFAM" id="SSF52949">
    <property type="entry name" value="Macro domain-like"/>
    <property type="match status" value="1"/>
</dbReference>
<dbReference type="SUPFAM" id="SSF53187">
    <property type="entry name" value="Zn-dependent exopeptidases"/>
    <property type="match status" value="1"/>
</dbReference>
<dbReference type="PROSITE" id="PS00631">
    <property type="entry name" value="CYTOSOL_AP"/>
    <property type="match status" value="1"/>
</dbReference>
<gene>
    <name evidence="1" type="primary">pepA</name>
    <name type="ordered locus">Rmet_2807</name>
</gene>
<proteinExistence type="inferred from homology"/>
<comment type="function">
    <text evidence="1">Presumably involved in the processing and regular turnover of intracellular proteins. Catalyzes the removal of unsubstituted N-terminal amino acids from various peptides.</text>
</comment>
<comment type="catalytic activity">
    <reaction evidence="1">
        <text>Release of an N-terminal amino acid, Xaa-|-Yaa-, in which Xaa is preferably Leu, but may be other amino acids including Pro although not Arg or Lys, and Yaa may be Pro. Amino acid amides and methyl esters are also readily hydrolyzed, but rates on arylamides are exceedingly low.</text>
        <dbReference type="EC" id="3.4.11.1"/>
    </reaction>
</comment>
<comment type="catalytic activity">
    <reaction evidence="1">
        <text>Release of an N-terminal amino acid, preferentially leucine, but not glutamic or aspartic acids.</text>
        <dbReference type="EC" id="3.4.11.10"/>
    </reaction>
</comment>
<comment type="cofactor">
    <cofactor evidence="1">
        <name>Mn(2+)</name>
        <dbReference type="ChEBI" id="CHEBI:29035"/>
    </cofactor>
    <text evidence="1">Binds 2 manganese ions per subunit.</text>
</comment>
<comment type="subcellular location">
    <subcellularLocation>
        <location evidence="1">Cytoplasm</location>
    </subcellularLocation>
</comment>
<comment type="similarity">
    <text evidence="1">Belongs to the peptidase M17 family.</text>
</comment>
<keyword id="KW-0031">Aminopeptidase</keyword>
<keyword id="KW-0963">Cytoplasm</keyword>
<keyword id="KW-0378">Hydrolase</keyword>
<keyword id="KW-0464">Manganese</keyword>
<keyword id="KW-0479">Metal-binding</keyword>
<keyword id="KW-0645">Protease</keyword>
<keyword id="KW-1185">Reference proteome</keyword>
<accession>Q1LJJ6</accession>
<reference key="1">
    <citation type="journal article" date="2010" name="PLoS ONE">
        <title>The complete genome sequence of Cupriavidus metallidurans strain CH34, a master survivalist in harsh and anthropogenic environments.</title>
        <authorList>
            <person name="Janssen P.J."/>
            <person name="Van Houdt R."/>
            <person name="Moors H."/>
            <person name="Monsieurs P."/>
            <person name="Morin N."/>
            <person name="Michaux A."/>
            <person name="Benotmane M.A."/>
            <person name="Leys N."/>
            <person name="Vallaeys T."/>
            <person name="Lapidus A."/>
            <person name="Monchy S."/>
            <person name="Medigue C."/>
            <person name="Taghavi S."/>
            <person name="McCorkle S."/>
            <person name="Dunn J."/>
            <person name="van der Lelie D."/>
            <person name="Mergeay M."/>
        </authorList>
    </citation>
    <scope>NUCLEOTIDE SEQUENCE [LARGE SCALE GENOMIC DNA]</scope>
    <source>
        <strain>ATCC 43123 / DSM 2839 / NBRC 102507 / CH34</strain>
    </source>
</reference>
<protein>
    <recommendedName>
        <fullName evidence="1">Probable cytosol aminopeptidase</fullName>
        <ecNumber evidence="1">3.4.11.1</ecNumber>
    </recommendedName>
    <alternativeName>
        <fullName evidence="1">Leucine aminopeptidase</fullName>
        <shortName evidence="1">LAP</shortName>
        <ecNumber evidence="1">3.4.11.10</ecNumber>
    </alternativeName>
    <alternativeName>
        <fullName evidence="1">Leucyl aminopeptidase</fullName>
    </alternativeName>
</protein>
<evidence type="ECO:0000255" key="1">
    <source>
        <dbReference type="HAMAP-Rule" id="MF_00181"/>
    </source>
</evidence>
<organism>
    <name type="scientific">Cupriavidus metallidurans (strain ATCC 43123 / DSM 2839 / NBRC 102507 / CH34)</name>
    <name type="common">Ralstonia metallidurans</name>
    <dbReference type="NCBI Taxonomy" id="266264"/>
    <lineage>
        <taxon>Bacteria</taxon>
        <taxon>Pseudomonadati</taxon>
        <taxon>Pseudomonadota</taxon>
        <taxon>Betaproteobacteria</taxon>
        <taxon>Burkholderiales</taxon>
        <taxon>Burkholderiaceae</taxon>
        <taxon>Cupriavidus</taxon>
    </lineage>
</organism>
<feature type="chain" id="PRO_1000019964" description="Probable cytosol aminopeptidase">
    <location>
        <begin position="1"/>
        <end position="510"/>
    </location>
</feature>
<feature type="active site" evidence="1">
    <location>
        <position position="294"/>
    </location>
</feature>
<feature type="active site" evidence="1">
    <location>
        <position position="368"/>
    </location>
</feature>
<feature type="binding site" evidence="1">
    <location>
        <position position="282"/>
    </location>
    <ligand>
        <name>Mn(2+)</name>
        <dbReference type="ChEBI" id="CHEBI:29035"/>
        <label>2</label>
    </ligand>
</feature>
<feature type="binding site" evidence="1">
    <location>
        <position position="287"/>
    </location>
    <ligand>
        <name>Mn(2+)</name>
        <dbReference type="ChEBI" id="CHEBI:29035"/>
        <label>1</label>
    </ligand>
</feature>
<feature type="binding site" evidence="1">
    <location>
        <position position="287"/>
    </location>
    <ligand>
        <name>Mn(2+)</name>
        <dbReference type="ChEBI" id="CHEBI:29035"/>
        <label>2</label>
    </ligand>
</feature>
<feature type="binding site" evidence="1">
    <location>
        <position position="305"/>
    </location>
    <ligand>
        <name>Mn(2+)</name>
        <dbReference type="ChEBI" id="CHEBI:29035"/>
        <label>2</label>
    </ligand>
</feature>
<feature type="binding site" evidence="1">
    <location>
        <position position="364"/>
    </location>
    <ligand>
        <name>Mn(2+)</name>
        <dbReference type="ChEBI" id="CHEBI:29035"/>
        <label>1</label>
    </ligand>
</feature>
<feature type="binding site" evidence="1">
    <location>
        <position position="366"/>
    </location>
    <ligand>
        <name>Mn(2+)</name>
        <dbReference type="ChEBI" id="CHEBI:29035"/>
        <label>1</label>
    </ligand>
</feature>
<feature type="binding site" evidence="1">
    <location>
        <position position="366"/>
    </location>
    <ligand>
        <name>Mn(2+)</name>
        <dbReference type="ChEBI" id="CHEBI:29035"/>
        <label>2</label>
    </ligand>
</feature>
<name>AMPA_CUPMC</name>
<sequence length="510" mass="53736">MEFSTKALDLSKAGQNGFLATKTDCLVVGLFEGQSLAGVAKALDVATKGLVARLVKQGDFEGKRGTQLMLHEVAGVGAARVLLVGLGKEADFNDKAFAEAVRTATRALGGTRAASALWCLVQQPPQQRDVAWAIITTITLVREAGYRLLERHPELKRAPRGAGANEKASLRKIVLAVDVGDAKAASQAAVRGTAIANGMELTRDLGNLPSNICTPTYLANTARGIAKRHKLKVEILGRKQIEALNMGAFLAVTKGSVEPPQFIVLRYDGASAKQAPVVLVGKGITFDTGGISLKPGEGMDEMKYDMCGAASVLGTIQAVAEMGLKQNVIAVVPTCENMPSGIATKPGDVVTSMSGQTIEILNTDAEGRLILCDALTYVERFKPAAVIDVATLTGACIIALGHVNSGLYARSDALADQLLGAGRKAMDTAWRLPLDDDYQDQLKSNFADMANIGGRPAGSVTAACFLARYTEKYDWAHLDIAGTAWKSGAAKGATGRPVPLLTQFLMDRAA</sequence>